<dbReference type="EC" id="6.3.5.-" evidence="1"/>
<dbReference type="EMBL" id="BX569689">
    <property type="protein sequence ID" value="CAE06807.1"/>
    <property type="molecule type" value="Genomic_DNA"/>
</dbReference>
<dbReference type="RefSeq" id="WP_011127166.1">
    <property type="nucleotide sequence ID" value="NC_005070.1"/>
</dbReference>
<dbReference type="SMR" id="Q7U9G6"/>
<dbReference type="STRING" id="84588.SYNW0292"/>
<dbReference type="KEGG" id="syw:SYNW0292"/>
<dbReference type="eggNOG" id="COG0721">
    <property type="taxonomic scope" value="Bacteria"/>
</dbReference>
<dbReference type="HOGENOM" id="CLU_105899_2_0_3"/>
<dbReference type="Proteomes" id="UP000001422">
    <property type="component" value="Chromosome"/>
</dbReference>
<dbReference type="GO" id="GO:0050566">
    <property type="term" value="F:asparaginyl-tRNA synthase (glutamine-hydrolyzing) activity"/>
    <property type="evidence" value="ECO:0007669"/>
    <property type="project" value="RHEA"/>
</dbReference>
<dbReference type="GO" id="GO:0005524">
    <property type="term" value="F:ATP binding"/>
    <property type="evidence" value="ECO:0007669"/>
    <property type="project" value="UniProtKB-KW"/>
</dbReference>
<dbReference type="GO" id="GO:0050567">
    <property type="term" value="F:glutaminyl-tRNA synthase (glutamine-hydrolyzing) activity"/>
    <property type="evidence" value="ECO:0007669"/>
    <property type="project" value="UniProtKB-UniRule"/>
</dbReference>
<dbReference type="GO" id="GO:0070681">
    <property type="term" value="P:glutaminyl-tRNAGln biosynthesis via transamidation"/>
    <property type="evidence" value="ECO:0007669"/>
    <property type="project" value="TreeGrafter"/>
</dbReference>
<dbReference type="GO" id="GO:0006450">
    <property type="term" value="P:regulation of translational fidelity"/>
    <property type="evidence" value="ECO:0007669"/>
    <property type="project" value="InterPro"/>
</dbReference>
<dbReference type="GO" id="GO:0006412">
    <property type="term" value="P:translation"/>
    <property type="evidence" value="ECO:0007669"/>
    <property type="project" value="UniProtKB-UniRule"/>
</dbReference>
<dbReference type="Gene3D" id="1.10.20.60">
    <property type="entry name" value="Glu-tRNAGln amidotransferase C subunit, N-terminal domain"/>
    <property type="match status" value="1"/>
</dbReference>
<dbReference type="HAMAP" id="MF_00122">
    <property type="entry name" value="GatC"/>
    <property type="match status" value="1"/>
</dbReference>
<dbReference type="InterPro" id="IPR036113">
    <property type="entry name" value="Asp/Glu-ADT_sf_sub_c"/>
</dbReference>
<dbReference type="InterPro" id="IPR003837">
    <property type="entry name" value="GatC"/>
</dbReference>
<dbReference type="NCBIfam" id="TIGR00135">
    <property type="entry name" value="gatC"/>
    <property type="match status" value="1"/>
</dbReference>
<dbReference type="PANTHER" id="PTHR15004">
    <property type="entry name" value="GLUTAMYL-TRNA(GLN) AMIDOTRANSFERASE SUBUNIT C, MITOCHONDRIAL"/>
    <property type="match status" value="1"/>
</dbReference>
<dbReference type="PANTHER" id="PTHR15004:SF0">
    <property type="entry name" value="GLUTAMYL-TRNA(GLN) AMIDOTRANSFERASE SUBUNIT C, MITOCHONDRIAL"/>
    <property type="match status" value="1"/>
</dbReference>
<dbReference type="Pfam" id="PF02686">
    <property type="entry name" value="GatC"/>
    <property type="match status" value="1"/>
</dbReference>
<dbReference type="SUPFAM" id="SSF141000">
    <property type="entry name" value="Glu-tRNAGln amidotransferase C subunit"/>
    <property type="match status" value="1"/>
</dbReference>
<gene>
    <name evidence="1" type="primary">gatC</name>
    <name type="ordered locus">SYNW0292</name>
</gene>
<proteinExistence type="inferred from homology"/>
<reference key="1">
    <citation type="journal article" date="2003" name="Nature">
        <title>The genome of a motile marine Synechococcus.</title>
        <authorList>
            <person name="Palenik B."/>
            <person name="Brahamsha B."/>
            <person name="Larimer F.W."/>
            <person name="Land M.L."/>
            <person name="Hauser L."/>
            <person name="Chain P."/>
            <person name="Lamerdin J.E."/>
            <person name="Regala W."/>
            <person name="Allen E.E."/>
            <person name="McCarren J."/>
            <person name="Paulsen I.T."/>
            <person name="Dufresne A."/>
            <person name="Partensky F."/>
            <person name="Webb E.A."/>
            <person name="Waterbury J."/>
        </authorList>
    </citation>
    <scope>NUCLEOTIDE SEQUENCE [LARGE SCALE GENOMIC DNA]</scope>
    <source>
        <strain>WH8102</strain>
    </source>
</reference>
<comment type="function">
    <text evidence="1">Allows the formation of correctly charged Asn-tRNA(Asn) or Gln-tRNA(Gln) through the transamidation of misacylated Asp-tRNA(Asn) or Glu-tRNA(Gln) in organisms which lack either or both of asparaginyl-tRNA or glutaminyl-tRNA synthetases. The reaction takes place in the presence of glutamine and ATP through an activated phospho-Asp-tRNA(Asn) or phospho-Glu-tRNA(Gln).</text>
</comment>
<comment type="catalytic activity">
    <reaction evidence="1">
        <text>L-glutamyl-tRNA(Gln) + L-glutamine + ATP + H2O = L-glutaminyl-tRNA(Gln) + L-glutamate + ADP + phosphate + H(+)</text>
        <dbReference type="Rhea" id="RHEA:17521"/>
        <dbReference type="Rhea" id="RHEA-COMP:9681"/>
        <dbReference type="Rhea" id="RHEA-COMP:9684"/>
        <dbReference type="ChEBI" id="CHEBI:15377"/>
        <dbReference type="ChEBI" id="CHEBI:15378"/>
        <dbReference type="ChEBI" id="CHEBI:29985"/>
        <dbReference type="ChEBI" id="CHEBI:30616"/>
        <dbReference type="ChEBI" id="CHEBI:43474"/>
        <dbReference type="ChEBI" id="CHEBI:58359"/>
        <dbReference type="ChEBI" id="CHEBI:78520"/>
        <dbReference type="ChEBI" id="CHEBI:78521"/>
        <dbReference type="ChEBI" id="CHEBI:456216"/>
    </reaction>
</comment>
<comment type="catalytic activity">
    <reaction evidence="1">
        <text>L-aspartyl-tRNA(Asn) + L-glutamine + ATP + H2O = L-asparaginyl-tRNA(Asn) + L-glutamate + ADP + phosphate + 2 H(+)</text>
        <dbReference type="Rhea" id="RHEA:14513"/>
        <dbReference type="Rhea" id="RHEA-COMP:9674"/>
        <dbReference type="Rhea" id="RHEA-COMP:9677"/>
        <dbReference type="ChEBI" id="CHEBI:15377"/>
        <dbReference type="ChEBI" id="CHEBI:15378"/>
        <dbReference type="ChEBI" id="CHEBI:29985"/>
        <dbReference type="ChEBI" id="CHEBI:30616"/>
        <dbReference type="ChEBI" id="CHEBI:43474"/>
        <dbReference type="ChEBI" id="CHEBI:58359"/>
        <dbReference type="ChEBI" id="CHEBI:78515"/>
        <dbReference type="ChEBI" id="CHEBI:78516"/>
        <dbReference type="ChEBI" id="CHEBI:456216"/>
    </reaction>
</comment>
<comment type="subunit">
    <text evidence="1">Heterotrimer of A, B and C subunits.</text>
</comment>
<comment type="similarity">
    <text evidence="1">Belongs to the GatC family.</text>
</comment>
<organism>
    <name type="scientific">Parasynechococcus marenigrum (strain WH8102)</name>
    <dbReference type="NCBI Taxonomy" id="84588"/>
    <lineage>
        <taxon>Bacteria</taxon>
        <taxon>Bacillati</taxon>
        <taxon>Cyanobacteriota</taxon>
        <taxon>Cyanophyceae</taxon>
        <taxon>Synechococcales</taxon>
        <taxon>Prochlorococcaceae</taxon>
        <taxon>Parasynechococcus</taxon>
        <taxon>Parasynechococcus marenigrum</taxon>
    </lineage>
</organism>
<accession>Q7U9G6</accession>
<protein>
    <recommendedName>
        <fullName evidence="1">Aspartyl/glutamyl-tRNA(Asn/Gln) amidotransferase subunit C</fullName>
        <shortName evidence="1">Asp/Glu-ADT subunit C</shortName>
        <ecNumber evidence="1">6.3.5.-</ecNumber>
    </recommendedName>
</protein>
<name>GATC_PARMW</name>
<keyword id="KW-0067">ATP-binding</keyword>
<keyword id="KW-0436">Ligase</keyword>
<keyword id="KW-0547">Nucleotide-binding</keyword>
<keyword id="KW-0648">Protein biosynthesis</keyword>
<feature type="chain" id="PRO_0000105350" description="Aspartyl/glutamyl-tRNA(Asn/Gln) amidotransferase subunit C">
    <location>
        <begin position="1"/>
        <end position="97"/>
    </location>
</feature>
<sequence length="97" mass="10813">MSRISADDVRKVAKLARLDLPEEKIATYTGQLESILEYVGQLESIDTEGVPETTRAVEVTNVTREDGVTPTPVREDILNQAPQREGDFFRVPKILAD</sequence>
<evidence type="ECO:0000255" key="1">
    <source>
        <dbReference type="HAMAP-Rule" id="MF_00122"/>
    </source>
</evidence>